<feature type="signal peptide" evidence="3">
    <location>
        <begin position="1"/>
        <end position="22"/>
    </location>
</feature>
<feature type="chain" id="PRO_0000401325" description="G-type lectin S-receptor-like serine/threonine-protein kinase At1g67520">
    <location>
        <begin position="23"/>
        <end position="818"/>
    </location>
</feature>
<feature type="topological domain" description="Extracellular" evidence="3">
    <location>
        <begin position="23"/>
        <end position="387"/>
    </location>
</feature>
<feature type="transmembrane region" description="Helical" evidence="3">
    <location>
        <begin position="388"/>
        <end position="408"/>
    </location>
</feature>
<feature type="topological domain" description="Cytoplasmic" evidence="3">
    <location>
        <begin position="409"/>
        <end position="818"/>
    </location>
</feature>
<feature type="domain" description="Bulb-type lectin" evidence="4">
    <location>
        <begin position="24"/>
        <end position="149"/>
    </location>
</feature>
<feature type="domain" description="PAN">
    <location>
        <begin position="290"/>
        <end position="379"/>
    </location>
</feature>
<feature type="domain" description="Protein kinase" evidence="5">
    <location>
        <begin position="496"/>
        <end position="785"/>
    </location>
</feature>
<feature type="region of interest" description="CaM-binding" evidence="1">
    <location>
        <begin position="585"/>
        <end position="602"/>
    </location>
</feature>
<feature type="active site" description="Proton acceptor" evidence="5 6">
    <location>
        <position position="621"/>
    </location>
</feature>
<feature type="binding site" evidence="5">
    <location>
        <begin position="502"/>
        <end position="510"/>
    </location>
    <ligand>
        <name>ATP</name>
        <dbReference type="ChEBI" id="CHEBI:30616"/>
    </ligand>
</feature>
<feature type="binding site" evidence="5">
    <location>
        <position position="524"/>
    </location>
    <ligand>
        <name>ATP</name>
        <dbReference type="ChEBI" id="CHEBI:30616"/>
    </ligand>
</feature>
<feature type="modified residue" description="Phosphoserine" evidence="2">
    <location>
        <position position="530"/>
    </location>
</feature>
<feature type="modified residue" description="Phosphoserine" evidence="2">
    <location>
        <position position="625"/>
    </location>
</feature>
<feature type="modified residue" description="Phosphoserine" evidence="2">
    <location>
        <position position="638"/>
    </location>
</feature>
<feature type="modified residue" description="Phosphothreonine" evidence="2">
    <location>
        <position position="655"/>
    </location>
</feature>
<feature type="modified residue" description="Phosphoserine" evidence="2">
    <location>
        <position position="699"/>
    </location>
</feature>
<feature type="modified residue" description="Phosphoserine" evidence="2">
    <location>
        <position position="807"/>
    </location>
</feature>
<feature type="modified residue" description="Phosphothreonine" evidence="2">
    <location>
        <position position="813"/>
    </location>
</feature>
<feature type="glycosylation site" description="N-linked (GlcNAc...) asparagine" evidence="3">
    <location>
        <position position="123"/>
    </location>
</feature>
<feature type="glycosylation site" description="N-linked (GlcNAc...) asparagine" evidence="3">
    <location>
        <position position="199"/>
    </location>
</feature>
<feature type="glycosylation site" description="N-linked (GlcNAc...) asparagine" evidence="3">
    <location>
        <position position="337"/>
    </location>
</feature>
<feature type="disulfide bond" evidence="4">
    <location>
        <begin position="330"/>
        <end position="353"/>
    </location>
</feature>
<feature type="disulfide bond" evidence="4">
    <location>
        <begin position="334"/>
        <end position="340"/>
    </location>
</feature>
<keyword id="KW-0067">ATP-binding</keyword>
<keyword id="KW-1003">Cell membrane</keyword>
<keyword id="KW-1015">Disulfide bond</keyword>
<keyword id="KW-0325">Glycoprotein</keyword>
<keyword id="KW-0418">Kinase</keyword>
<keyword id="KW-0430">Lectin</keyword>
<keyword id="KW-0472">Membrane</keyword>
<keyword id="KW-0547">Nucleotide-binding</keyword>
<keyword id="KW-0597">Phosphoprotein</keyword>
<keyword id="KW-0675">Receptor</keyword>
<keyword id="KW-1185">Reference proteome</keyword>
<keyword id="KW-0723">Serine/threonine-protein kinase</keyword>
<keyword id="KW-0732">Signal</keyword>
<keyword id="KW-0808">Transferase</keyword>
<keyword id="KW-0812">Transmembrane</keyword>
<keyword id="KW-1133">Transmembrane helix</keyword>
<dbReference type="EC" id="2.7.11.1"/>
<dbReference type="EMBL" id="AC004393">
    <property type="protein sequence ID" value="AAC18783.1"/>
    <property type="status" value="ALT_SEQ"/>
    <property type="molecule type" value="Genomic_DNA"/>
</dbReference>
<dbReference type="EMBL" id="AC011020">
    <property type="protein sequence ID" value="AAG52302.1"/>
    <property type="status" value="ALT_SEQ"/>
    <property type="molecule type" value="Genomic_DNA"/>
</dbReference>
<dbReference type="EMBL" id="CP002684">
    <property type="protein sequence ID" value="AEE34658.1"/>
    <property type="status" value="ALT_SEQ"/>
    <property type="molecule type" value="Genomic_DNA"/>
</dbReference>
<dbReference type="PIR" id="T02153">
    <property type="entry name" value="T02153"/>
</dbReference>
<dbReference type="RefSeq" id="NP_176919.2">
    <property type="nucleotide sequence ID" value="NM_105419.2"/>
</dbReference>
<dbReference type="SMR" id="O64793"/>
<dbReference type="STRING" id="3702.O64793"/>
<dbReference type="GlyGen" id="O64793">
    <property type="glycosylation" value="3 sites"/>
</dbReference>
<dbReference type="ProteomicsDB" id="243035"/>
<dbReference type="GeneID" id="843073"/>
<dbReference type="KEGG" id="ath:AT1G67520"/>
<dbReference type="Araport" id="AT1G67520"/>
<dbReference type="TAIR" id="AT1G67520"/>
<dbReference type="eggNOG" id="ENOG502QTRQ">
    <property type="taxonomic scope" value="Eukaryota"/>
</dbReference>
<dbReference type="InParanoid" id="O64793"/>
<dbReference type="PRO" id="PR:O64793"/>
<dbReference type="Proteomes" id="UP000006548">
    <property type="component" value="Chromosome 1"/>
</dbReference>
<dbReference type="ExpressionAtlas" id="O64793">
    <property type="expression patterns" value="baseline and differential"/>
</dbReference>
<dbReference type="GO" id="GO:0005886">
    <property type="term" value="C:plasma membrane"/>
    <property type="evidence" value="ECO:0000318"/>
    <property type="project" value="GO_Central"/>
</dbReference>
<dbReference type="GO" id="GO:0005524">
    <property type="term" value="F:ATP binding"/>
    <property type="evidence" value="ECO:0007669"/>
    <property type="project" value="UniProtKB-KW"/>
</dbReference>
<dbReference type="GO" id="GO:0005516">
    <property type="term" value="F:calmodulin binding"/>
    <property type="evidence" value="ECO:0000250"/>
    <property type="project" value="UniProtKB"/>
</dbReference>
<dbReference type="GO" id="GO:0030246">
    <property type="term" value="F:carbohydrate binding"/>
    <property type="evidence" value="ECO:0007669"/>
    <property type="project" value="UniProtKB-KW"/>
</dbReference>
<dbReference type="GO" id="GO:0106310">
    <property type="term" value="F:protein serine kinase activity"/>
    <property type="evidence" value="ECO:0007669"/>
    <property type="project" value="RHEA"/>
</dbReference>
<dbReference type="GO" id="GO:0004674">
    <property type="term" value="F:protein serine/threonine kinase activity"/>
    <property type="evidence" value="ECO:0000250"/>
    <property type="project" value="UniProtKB"/>
</dbReference>
<dbReference type="GO" id="GO:0006955">
    <property type="term" value="P:immune response"/>
    <property type="evidence" value="ECO:0000318"/>
    <property type="project" value="GO_Central"/>
</dbReference>
<dbReference type="GO" id="GO:0007165">
    <property type="term" value="P:signal transduction"/>
    <property type="evidence" value="ECO:0000318"/>
    <property type="project" value="GO_Central"/>
</dbReference>
<dbReference type="CDD" id="cd00028">
    <property type="entry name" value="B_lectin"/>
    <property type="match status" value="1"/>
</dbReference>
<dbReference type="CDD" id="cd01098">
    <property type="entry name" value="PAN_AP_plant"/>
    <property type="match status" value="1"/>
</dbReference>
<dbReference type="CDD" id="cd14066">
    <property type="entry name" value="STKc_IRAK"/>
    <property type="match status" value="1"/>
</dbReference>
<dbReference type="FunFam" id="1.10.510.10:FF:000345">
    <property type="entry name" value="G-type lectin S-receptor-like serine/threonine-protein kinase"/>
    <property type="match status" value="1"/>
</dbReference>
<dbReference type="FunFam" id="3.30.200.20:FF:000330">
    <property type="entry name" value="G-type lectin S-receptor-like serine/threonine-protein kinase At4g03230"/>
    <property type="match status" value="1"/>
</dbReference>
<dbReference type="FunFam" id="2.90.10.10:FF:000009">
    <property type="entry name" value="Receptor-like serine/threonine-protein kinase SD1-8"/>
    <property type="match status" value="1"/>
</dbReference>
<dbReference type="Gene3D" id="2.90.10.10">
    <property type="entry name" value="Bulb-type lectin domain"/>
    <property type="match status" value="1"/>
</dbReference>
<dbReference type="Gene3D" id="3.30.200.20">
    <property type="entry name" value="Phosphorylase Kinase, domain 1"/>
    <property type="match status" value="1"/>
</dbReference>
<dbReference type="Gene3D" id="1.10.510.10">
    <property type="entry name" value="Transferase(Phosphotransferase) domain 1"/>
    <property type="match status" value="1"/>
</dbReference>
<dbReference type="InterPro" id="IPR001480">
    <property type="entry name" value="Bulb-type_lectin_dom"/>
</dbReference>
<dbReference type="InterPro" id="IPR036426">
    <property type="entry name" value="Bulb-type_lectin_dom_sf"/>
</dbReference>
<dbReference type="InterPro" id="IPR011009">
    <property type="entry name" value="Kinase-like_dom_sf"/>
</dbReference>
<dbReference type="InterPro" id="IPR003609">
    <property type="entry name" value="Pan_app"/>
</dbReference>
<dbReference type="InterPro" id="IPR000719">
    <property type="entry name" value="Prot_kinase_dom"/>
</dbReference>
<dbReference type="InterPro" id="IPR001245">
    <property type="entry name" value="Ser-Thr/Tyr_kinase_cat_dom"/>
</dbReference>
<dbReference type="InterPro" id="IPR008271">
    <property type="entry name" value="Ser/Thr_kinase_AS"/>
</dbReference>
<dbReference type="InterPro" id="IPR024171">
    <property type="entry name" value="SRK-like_kinase"/>
</dbReference>
<dbReference type="PANTHER" id="PTHR27002">
    <property type="entry name" value="RECEPTOR-LIKE SERINE/THREONINE-PROTEIN KINASE SD1-8"/>
    <property type="match status" value="1"/>
</dbReference>
<dbReference type="PANTHER" id="PTHR27002:SF995">
    <property type="entry name" value="RECEPTOR-LIKE SERINE_THREONINE-PROTEIN KINASE"/>
    <property type="match status" value="1"/>
</dbReference>
<dbReference type="Pfam" id="PF01453">
    <property type="entry name" value="B_lectin"/>
    <property type="match status" value="1"/>
</dbReference>
<dbReference type="Pfam" id="PF08276">
    <property type="entry name" value="PAN_2"/>
    <property type="match status" value="1"/>
</dbReference>
<dbReference type="Pfam" id="PF07714">
    <property type="entry name" value="PK_Tyr_Ser-Thr"/>
    <property type="match status" value="1"/>
</dbReference>
<dbReference type="PIRSF" id="PIRSF000641">
    <property type="entry name" value="SRK"/>
    <property type="match status" value="1"/>
</dbReference>
<dbReference type="SMART" id="SM00108">
    <property type="entry name" value="B_lectin"/>
    <property type="match status" value="1"/>
</dbReference>
<dbReference type="SMART" id="SM00473">
    <property type="entry name" value="PAN_AP"/>
    <property type="match status" value="1"/>
</dbReference>
<dbReference type="SMART" id="SM00220">
    <property type="entry name" value="S_TKc"/>
    <property type="match status" value="1"/>
</dbReference>
<dbReference type="SUPFAM" id="SSF51110">
    <property type="entry name" value="alpha-D-mannose-specific plant lectins"/>
    <property type="match status" value="1"/>
</dbReference>
<dbReference type="SUPFAM" id="SSF56112">
    <property type="entry name" value="Protein kinase-like (PK-like)"/>
    <property type="match status" value="1"/>
</dbReference>
<dbReference type="PROSITE" id="PS50927">
    <property type="entry name" value="BULB_LECTIN"/>
    <property type="match status" value="1"/>
</dbReference>
<dbReference type="PROSITE" id="PS50011">
    <property type="entry name" value="PROTEIN_KINASE_DOM"/>
    <property type="match status" value="1"/>
</dbReference>
<dbReference type="PROSITE" id="PS00108">
    <property type="entry name" value="PROTEIN_KINASE_ST"/>
    <property type="match status" value="1"/>
</dbReference>
<protein>
    <recommendedName>
        <fullName>G-type lectin S-receptor-like serine/threonine-protein kinase At1g67520</fullName>
        <ecNumber>2.7.11.1</ecNumber>
    </recommendedName>
</protein>
<proteinExistence type="evidence at transcript level"/>
<name>Y1675_ARATH</name>
<sequence>MCSNGIFVSLLTLSLLLGKSCSETDTLHQGQFLKDGQELVSAFKIFKLKFFNFKNSENLYLGIWFNNLYLNTDSQDRPVWIANRNNPISDRSGSLTVDSLGRLKILRGASTMLELSSIETTRNTTLQLLDSGNLQLQEMDADGSMKRVLWQSFDYPTDTLLPGMKLGFDGKTRKRWELTSWLGDTLPASGSFVFGMDTNITNVLTILWRGNMYWSSGLWNKGRFSEEELNECGFLFSFVSTKSGQYFMYSGDQDDARTFFPTIMIDEQGILRREQMHRQRNRQNYRNRNCLAAGYVVRDEPYGFTSFRVTVSSSASNGFVLSGTFSSVDCSAICLQNSSCLAYASTEPDGTGCEIWNTYPTNKGSASHSPRTIYIRGNENKKVAAWHIVVATLFLMTPIIWFIIYLVLRKFNVKGRNCIRITHKTVLVSMVFLLTMIGFIRRRILSLRFGSTIDQEMLLRELGIDRSCIHKRNERKSNNELQIFSFESVVSATDDFSDENKLGEGGFGPVYKGKLLNGEEVAIKRLSLASGQGLVEFKNEAILIAKLQHTNLVQVLGCCIEKDEKMLIYEYMQNKSLDYFLFDPLRKNVLDWTLRFRIMEGIIQGLLYLHKYSRLKVIHRDIKASNILLDEDMNPKISDFGLARIFGAEETRANTKRVAGTFGYMSPEYFREGLFSAKSDVFSFGVLMLEIICGRKNNSFHHDLEGPLNLIVHVWNLFKENKIREVIDLSLRDSALDYPQVLRCVQVALLCVQENAEDRPSMLDVVSMIYGEGNNALSLPKEPAFYDGPRRSFPEMKVEPQEPENVSASITITVLEAR</sequence>
<comment type="catalytic activity">
    <reaction>
        <text>L-seryl-[protein] + ATP = O-phospho-L-seryl-[protein] + ADP + H(+)</text>
        <dbReference type="Rhea" id="RHEA:17989"/>
        <dbReference type="Rhea" id="RHEA-COMP:9863"/>
        <dbReference type="Rhea" id="RHEA-COMP:11604"/>
        <dbReference type="ChEBI" id="CHEBI:15378"/>
        <dbReference type="ChEBI" id="CHEBI:29999"/>
        <dbReference type="ChEBI" id="CHEBI:30616"/>
        <dbReference type="ChEBI" id="CHEBI:83421"/>
        <dbReference type="ChEBI" id="CHEBI:456216"/>
        <dbReference type="EC" id="2.7.11.1"/>
    </reaction>
</comment>
<comment type="catalytic activity">
    <reaction>
        <text>L-threonyl-[protein] + ATP = O-phospho-L-threonyl-[protein] + ADP + H(+)</text>
        <dbReference type="Rhea" id="RHEA:46608"/>
        <dbReference type="Rhea" id="RHEA-COMP:11060"/>
        <dbReference type="Rhea" id="RHEA-COMP:11605"/>
        <dbReference type="ChEBI" id="CHEBI:15378"/>
        <dbReference type="ChEBI" id="CHEBI:30013"/>
        <dbReference type="ChEBI" id="CHEBI:30616"/>
        <dbReference type="ChEBI" id="CHEBI:61977"/>
        <dbReference type="ChEBI" id="CHEBI:456216"/>
        <dbReference type="EC" id="2.7.11.1"/>
    </reaction>
</comment>
<comment type="subcellular location">
    <subcellularLocation>
        <location evidence="1">Cell membrane</location>
        <topology evidence="1">Single-pass type I membrane protein</topology>
    </subcellularLocation>
</comment>
<comment type="similarity">
    <text evidence="5">Belongs to the protein kinase superfamily. Ser/Thr protein kinase family.</text>
</comment>
<comment type="sequence caution" evidence="7">
    <conflict type="erroneous gene model prediction">
        <sequence resource="EMBL-CDS" id="AAC18783"/>
    </conflict>
</comment>
<comment type="sequence caution" evidence="7">
    <conflict type="erroneous gene model prediction">
        <sequence resource="EMBL-CDS" id="AAG52302"/>
    </conflict>
</comment>
<comment type="sequence caution" evidence="7">
    <conflict type="erroneous gene model prediction">
        <sequence resource="EMBL-CDS" id="AEE34658"/>
    </conflict>
</comment>
<reference key="1">
    <citation type="journal article" date="2000" name="Nature">
        <title>Sequence and analysis of chromosome 1 of the plant Arabidopsis thaliana.</title>
        <authorList>
            <person name="Theologis A."/>
            <person name="Ecker J.R."/>
            <person name="Palm C.J."/>
            <person name="Federspiel N.A."/>
            <person name="Kaul S."/>
            <person name="White O."/>
            <person name="Alonso J."/>
            <person name="Altafi H."/>
            <person name="Araujo R."/>
            <person name="Bowman C.L."/>
            <person name="Brooks S.Y."/>
            <person name="Buehler E."/>
            <person name="Chan A."/>
            <person name="Chao Q."/>
            <person name="Chen H."/>
            <person name="Cheuk R.F."/>
            <person name="Chin C.W."/>
            <person name="Chung M.K."/>
            <person name="Conn L."/>
            <person name="Conway A.B."/>
            <person name="Conway A.R."/>
            <person name="Creasy T.H."/>
            <person name="Dewar K."/>
            <person name="Dunn P."/>
            <person name="Etgu P."/>
            <person name="Feldblyum T.V."/>
            <person name="Feng J.-D."/>
            <person name="Fong B."/>
            <person name="Fujii C.Y."/>
            <person name="Gill J.E."/>
            <person name="Goldsmith A.D."/>
            <person name="Haas B."/>
            <person name="Hansen N.F."/>
            <person name="Hughes B."/>
            <person name="Huizar L."/>
            <person name="Hunter J.L."/>
            <person name="Jenkins J."/>
            <person name="Johnson-Hopson C."/>
            <person name="Khan S."/>
            <person name="Khaykin E."/>
            <person name="Kim C.J."/>
            <person name="Koo H.L."/>
            <person name="Kremenetskaia I."/>
            <person name="Kurtz D.B."/>
            <person name="Kwan A."/>
            <person name="Lam B."/>
            <person name="Langin-Hooper S."/>
            <person name="Lee A."/>
            <person name="Lee J.M."/>
            <person name="Lenz C.A."/>
            <person name="Li J.H."/>
            <person name="Li Y.-P."/>
            <person name="Lin X."/>
            <person name="Liu S.X."/>
            <person name="Liu Z.A."/>
            <person name="Luros J.S."/>
            <person name="Maiti R."/>
            <person name="Marziali A."/>
            <person name="Militscher J."/>
            <person name="Miranda M."/>
            <person name="Nguyen M."/>
            <person name="Nierman W.C."/>
            <person name="Osborne B.I."/>
            <person name="Pai G."/>
            <person name="Peterson J."/>
            <person name="Pham P.K."/>
            <person name="Rizzo M."/>
            <person name="Rooney T."/>
            <person name="Rowley D."/>
            <person name="Sakano H."/>
            <person name="Salzberg S.L."/>
            <person name="Schwartz J.R."/>
            <person name="Shinn P."/>
            <person name="Southwick A.M."/>
            <person name="Sun H."/>
            <person name="Tallon L.J."/>
            <person name="Tambunga G."/>
            <person name="Toriumi M.J."/>
            <person name="Town C.D."/>
            <person name="Utterback T."/>
            <person name="Van Aken S."/>
            <person name="Vaysberg M."/>
            <person name="Vysotskaia V.S."/>
            <person name="Walker M."/>
            <person name="Wu D."/>
            <person name="Yu G."/>
            <person name="Fraser C.M."/>
            <person name="Venter J.C."/>
            <person name="Davis R.W."/>
        </authorList>
    </citation>
    <scope>NUCLEOTIDE SEQUENCE [LARGE SCALE GENOMIC DNA]</scope>
    <source>
        <strain>cv. Columbia</strain>
    </source>
</reference>
<reference key="2">
    <citation type="journal article" date="2017" name="Plant J.">
        <title>Araport11: a complete reannotation of the Arabidopsis thaliana reference genome.</title>
        <authorList>
            <person name="Cheng C.Y."/>
            <person name="Krishnakumar V."/>
            <person name="Chan A.P."/>
            <person name="Thibaud-Nissen F."/>
            <person name="Schobel S."/>
            <person name="Town C.D."/>
        </authorList>
    </citation>
    <scope>GENOME REANNOTATION</scope>
    <source>
        <strain>cv. Columbia</strain>
    </source>
</reference>
<gene>
    <name type="ordered locus">At1g67520</name>
    <name type="ORF">F12B7.7</name>
    <name type="ORF">T1F15.1</name>
</gene>
<accession>O64793</accession>
<accession>F4HTM7</accession>
<organism>
    <name type="scientific">Arabidopsis thaliana</name>
    <name type="common">Mouse-ear cress</name>
    <dbReference type="NCBI Taxonomy" id="3702"/>
    <lineage>
        <taxon>Eukaryota</taxon>
        <taxon>Viridiplantae</taxon>
        <taxon>Streptophyta</taxon>
        <taxon>Embryophyta</taxon>
        <taxon>Tracheophyta</taxon>
        <taxon>Spermatophyta</taxon>
        <taxon>Magnoliopsida</taxon>
        <taxon>eudicotyledons</taxon>
        <taxon>Gunneridae</taxon>
        <taxon>Pentapetalae</taxon>
        <taxon>rosids</taxon>
        <taxon>malvids</taxon>
        <taxon>Brassicales</taxon>
        <taxon>Brassicaceae</taxon>
        <taxon>Camelineae</taxon>
        <taxon>Arabidopsis</taxon>
    </lineage>
</organism>
<evidence type="ECO:0000250" key="1"/>
<evidence type="ECO:0000250" key="2">
    <source>
        <dbReference type="UniProtKB" id="Q9LPZ9"/>
    </source>
</evidence>
<evidence type="ECO:0000255" key="3"/>
<evidence type="ECO:0000255" key="4">
    <source>
        <dbReference type="PROSITE-ProRule" id="PRU00038"/>
    </source>
</evidence>
<evidence type="ECO:0000255" key="5">
    <source>
        <dbReference type="PROSITE-ProRule" id="PRU00159"/>
    </source>
</evidence>
<evidence type="ECO:0000255" key="6">
    <source>
        <dbReference type="PROSITE-ProRule" id="PRU10027"/>
    </source>
</evidence>
<evidence type="ECO:0000305" key="7"/>